<organism>
    <name type="scientific">Bacillus subtilis (strain 168)</name>
    <dbReference type="NCBI Taxonomy" id="224308"/>
    <lineage>
        <taxon>Bacteria</taxon>
        <taxon>Bacillati</taxon>
        <taxon>Bacillota</taxon>
        <taxon>Bacilli</taxon>
        <taxon>Bacillales</taxon>
        <taxon>Bacillaceae</taxon>
        <taxon>Bacillus</taxon>
    </lineage>
</organism>
<name>YOSL_BACSU</name>
<reference key="1">
    <citation type="journal article" date="1997" name="Nature">
        <title>The complete genome sequence of the Gram-positive bacterium Bacillus subtilis.</title>
        <authorList>
            <person name="Kunst F."/>
            <person name="Ogasawara N."/>
            <person name="Moszer I."/>
            <person name="Albertini A.M."/>
            <person name="Alloni G."/>
            <person name="Azevedo V."/>
            <person name="Bertero M.G."/>
            <person name="Bessieres P."/>
            <person name="Bolotin A."/>
            <person name="Borchert S."/>
            <person name="Borriss R."/>
            <person name="Boursier L."/>
            <person name="Brans A."/>
            <person name="Braun M."/>
            <person name="Brignell S.C."/>
            <person name="Bron S."/>
            <person name="Brouillet S."/>
            <person name="Bruschi C.V."/>
            <person name="Caldwell B."/>
            <person name="Capuano V."/>
            <person name="Carter N.M."/>
            <person name="Choi S.-K."/>
            <person name="Codani J.-J."/>
            <person name="Connerton I.F."/>
            <person name="Cummings N.J."/>
            <person name="Daniel R.A."/>
            <person name="Denizot F."/>
            <person name="Devine K.M."/>
            <person name="Duesterhoeft A."/>
            <person name="Ehrlich S.D."/>
            <person name="Emmerson P.T."/>
            <person name="Entian K.-D."/>
            <person name="Errington J."/>
            <person name="Fabret C."/>
            <person name="Ferrari E."/>
            <person name="Foulger D."/>
            <person name="Fritz C."/>
            <person name="Fujita M."/>
            <person name="Fujita Y."/>
            <person name="Fuma S."/>
            <person name="Galizzi A."/>
            <person name="Galleron N."/>
            <person name="Ghim S.-Y."/>
            <person name="Glaser P."/>
            <person name="Goffeau A."/>
            <person name="Golightly E.J."/>
            <person name="Grandi G."/>
            <person name="Guiseppi G."/>
            <person name="Guy B.J."/>
            <person name="Haga K."/>
            <person name="Haiech J."/>
            <person name="Harwood C.R."/>
            <person name="Henaut A."/>
            <person name="Hilbert H."/>
            <person name="Holsappel S."/>
            <person name="Hosono S."/>
            <person name="Hullo M.-F."/>
            <person name="Itaya M."/>
            <person name="Jones L.-M."/>
            <person name="Joris B."/>
            <person name="Karamata D."/>
            <person name="Kasahara Y."/>
            <person name="Klaerr-Blanchard M."/>
            <person name="Klein C."/>
            <person name="Kobayashi Y."/>
            <person name="Koetter P."/>
            <person name="Koningstein G."/>
            <person name="Krogh S."/>
            <person name="Kumano M."/>
            <person name="Kurita K."/>
            <person name="Lapidus A."/>
            <person name="Lardinois S."/>
            <person name="Lauber J."/>
            <person name="Lazarevic V."/>
            <person name="Lee S.-M."/>
            <person name="Levine A."/>
            <person name="Liu H."/>
            <person name="Masuda S."/>
            <person name="Mauel C."/>
            <person name="Medigue C."/>
            <person name="Medina N."/>
            <person name="Mellado R.P."/>
            <person name="Mizuno M."/>
            <person name="Moestl D."/>
            <person name="Nakai S."/>
            <person name="Noback M."/>
            <person name="Noone D."/>
            <person name="O'Reilly M."/>
            <person name="Ogawa K."/>
            <person name="Ogiwara A."/>
            <person name="Oudega B."/>
            <person name="Park S.-H."/>
            <person name="Parro V."/>
            <person name="Pohl T.M."/>
            <person name="Portetelle D."/>
            <person name="Porwollik S."/>
            <person name="Prescott A.M."/>
            <person name="Presecan E."/>
            <person name="Pujic P."/>
            <person name="Purnelle B."/>
            <person name="Rapoport G."/>
            <person name="Rey M."/>
            <person name="Reynolds S."/>
            <person name="Rieger M."/>
            <person name="Rivolta C."/>
            <person name="Rocha E."/>
            <person name="Roche B."/>
            <person name="Rose M."/>
            <person name="Sadaie Y."/>
            <person name="Sato T."/>
            <person name="Scanlan E."/>
            <person name="Schleich S."/>
            <person name="Schroeter R."/>
            <person name="Scoffone F."/>
            <person name="Sekiguchi J."/>
            <person name="Sekowska A."/>
            <person name="Seror S.J."/>
            <person name="Serror P."/>
            <person name="Shin B.-S."/>
            <person name="Soldo B."/>
            <person name="Sorokin A."/>
            <person name="Tacconi E."/>
            <person name="Takagi T."/>
            <person name="Takahashi H."/>
            <person name="Takemaru K."/>
            <person name="Takeuchi M."/>
            <person name="Tamakoshi A."/>
            <person name="Tanaka T."/>
            <person name="Terpstra P."/>
            <person name="Tognoni A."/>
            <person name="Tosato V."/>
            <person name="Uchiyama S."/>
            <person name="Vandenbol M."/>
            <person name="Vannier F."/>
            <person name="Vassarotti A."/>
            <person name="Viari A."/>
            <person name="Wambutt R."/>
            <person name="Wedler E."/>
            <person name="Wedler H."/>
            <person name="Weitzenegger T."/>
            <person name="Winters P."/>
            <person name="Wipat A."/>
            <person name="Yamamoto H."/>
            <person name="Yamane K."/>
            <person name="Yasumoto K."/>
            <person name="Yata K."/>
            <person name="Yoshida K."/>
            <person name="Yoshikawa H.-F."/>
            <person name="Zumstein E."/>
            <person name="Yoshikawa H."/>
            <person name="Danchin A."/>
        </authorList>
    </citation>
    <scope>NUCLEOTIDE SEQUENCE [LARGE SCALE GENOMIC DNA]</scope>
    <source>
        <strain>168</strain>
    </source>
</reference>
<proteinExistence type="predicted"/>
<protein>
    <recommendedName>
        <fullName>SPbeta prophage-derived uncharacterized protein YosL</fullName>
    </recommendedName>
</protein>
<accession>O31877</accession>
<gene>
    <name type="primary">yosL</name>
    <name type="ordered locus">BSU20080</name>
</gene>
<dbReference type="EMBL" id="AL009126">
    <property type="protein sequence ID" value="CAB13900.1"/>
    <property type="molecule type" value="Genomic_DNA"/>
</dbReference>
<dbReference type="RefSeq" id="NP_389890.1">
    <property type="nucleotide sequence ID" value="NC_000964.3"/>
</dbReference>
<dbReference type="RefSeq" id="WP_004399275.1">
    <property type="nucleotide sequence ID" value="NZ_OZ025638.1"/>
</dbReference>
<dbReference type="SMR" id="O31877"/>
<dbReference type="FunCoup" id="O31877">
    <property type="interactions" value="122"/>
</dbReference>
<dbReference type="IntAct" id="O31877">
    <property type="interactions" value="1"/>
</dbReference>
<dbReference type="STRING" id="224308.BSU20080"/>
<dbReference type="PaxDb" id="224308-BSU20080"/>
<dbReference type="EnsemblBacteria" id="CAB13900">
    <property type="protein sequence ID" value="CAB13900"/>
    <property type="gene ID" value="BSU_20080"/>
</dbReference>
<dbReference type="GeneID" id="939559"/>
<dbReference type="KEGG" id="bsu:BSU20080"/>
<dbReference type="PATRIC" id="fig|224308.179.peg.2198"/>
<dbReference type="InParanoid" id="O31877"/>
<dbReference type="OrthoDB" id="2897744at2"/>
<dbReference type="BioCyc" id="BSUB:BSU20080-MONOMER"/>
<dbReference type="Proteomes" id="UP000001570">
    <property type="component" value="Chromosome"/>
</dbReference>
<dbReference type="GO" id="GO:0006355">
    <property type="term" value="P:regulation of DNA-templated transcription"/>
    <property type="evidence" value="ECO:0007669"/>
    <property type="project" value="InterPro"/>
</dbReference>
<dbReference type="Gene3D" id="1.10.1220.10">
    <property type="entry name" value="Met repressor-like"/>
    <property type="match status" value="1"/>
</dbReference>
<dbReference type="InterPro" id="IPR013321">
    <property type="entry name" value="Arc_rbn_hlx_hlx"/>
</dbReference>
<keyword id="KW-1185">Reference proteome</keyword>
<sequence length="117" mass="13136">MGAARRIDPTQPYVKKKNIINFTVATENTHIHLADGQSFPVLKGEIIATDQQGNQFVELEKNLDDYVPVKKSSLYESMAQGYMEMGDINREISEAFNYAENEAETVTTKLITGAYND</sequence>
<feature type="chain" id="PRO_0000375826" description="SPbeta prophage-derived uncharacterized protein YosL">
    <location>
        <begin position="1"/>
        <end position="117"/>
    </location>
</feature>